<gene>
    <name type="primary">gcl</name>
    <name type="ORF">CG8411</name>
</gene>
<accession>Q01820</accession>
<accession>Q9V4X5</accession>
<reference key="1">
    <citation type="journal article" date="1992" name="Cell">
        <title>The germ cell-less gene product: a posteriorly localized component necessary for germ cell development in Drosophila.</title>
        <authorList>
            <person name="Jongens T.A."/>
            <person name="Hay B."/>
            <person name="Jan L.Y."/>
            <person name="Jan Y.N."/>
        </authorList>
    </citation>
    <scope>NUCLEOTIDE SEQUENCE [GENOMIC DNA]</scope>
</reference>
<reference key="2">
    <citation type="journal article" date="2000" name="Science">
        <title>The genome sequence of Drosophila melanogaster.</title>
        <authorList>
            <person name="Adams M.D."/>
            <person name="Celniker S.E."/>
            <person name="Holt R.A."/>
            <person name="Evans C.A."/>
            <person name="Gocayne J.D."/>
            <person name="Amanatides P.G."/>
            <person name="Scherer S.E."/>
            <person name="Li P.W."/>
            <person name="Hoskins R.A."/>
            <person name="Galle R.F."/>
            <person name="George R.A."/>
            <person name="Lewis S.E."/>
            <person name="Richards S."/>
            <person name="Ashburner M."/>
            <person name="Henderson S.N."/>
            <person name="Sutton G.G."/>
            <person name="Wortman J.R."/>
            <person name="Yandell M.D."/>
            <person name="Zhang Q."/>
            <person name="Chen L.X."/>
            <person name="Brandon R.C."/>
            <person name="Rogers Y.-H.C."/>
            <person name="Blazej R.G."/>
            <person name="Champe M."/>
            <person name="Pfeiffer B.D."/>
            <person name="Wan K.H."/>
            <person name="Doyle C."/>
            <person name="Baxter E.G."/>
            <person name="Helt G."/>
            <person name="Nelson C.R."/>
            <person name="Miklos G.L.G."/>
            <person name="Abril J.F."/>
            <person name="Agbayani A."/>
            <person name="An H.-J."/>
            <person name="Andrews-Pfannkoch C."/>
            <person name="Baldwin D."/>
            <person name="Ballew R.M."/>
            <person name="Basu A."/>
            <person name="Baxendale J."/>
            <person name="Bayraktaroglu L."/>
            <person name="Beasley E.M."/>
            <person name="Beeson K.Y."/>
            <person name="Benos P.V."/>
            <person name="Berman B.P."/>
            <person name="Bhandari D."/>
            <person name="Bolshakov S."/>
            <person name="Borkova D."/>
            <person name="Botchan M.R."/>
            <person name="Bouck J."/>
            <person name="Brokstein P."/>
            <person name="Brottier P."/>
            <person name="Burtis K.C."/>
            <person name="Busam D.A."/>
            <person name="Butler H."/>
            <person name="Cadieu E."/>
            <person name="Center A."/>
            <person name="Chandra I."/>
            <person name="Cherry J.M."/>
            <person name="Cawley S."/>
            <person name="Dahlke C."/>
            <person name="Davenport L.B."/>
            <person name="Davies P."/>
            <person name="de Pablos B."/>
            <person name="Delcher A."/>
            <person name="Deng Z."/>
            <person name="Mays A.D."/>
            <person name="Dew I."/>
            <person name="Dietz S.M."/>
            <person name="Dodson K."/>
            <person name="Doup L.E."/>
            <person name="Downes M."/>
            <person name="Dugan-Rocha S."/>
            <person name="Dunkov B.C."/>
            <person name="Dunn P."/>
            <person name="Durbin K.J."/>
            <person name="Evangelista C.C."/>
            <person name="Ferraz C."/>
            <person name="Ferriera S."/>
            <person name="Fleischmann W."/>
            <person name="Fosler C."/>
            <person name="Gabrielian A.E."/>
            <person name="Garg N.S."/>
            <person name="Gelbart W.M."/>
            <person name="Glasser K."/>
            <person name="Glodek A."/>
            <person name="Gong F."/>
            <person name="Gorrell J.H."/>
            <person name="Gu Z."/>
            <person name="Guan P."/>
            <person name="Harris M."/>
            <person name="Harris N.L."/>
            <person name="Harvey D.A."/>
            <person name="Heiman T.J."/>
            <person name="Hernandez J.R."/>
            <person name="Houck J."/>
            <person name="Hostin D."/>
            <person name="Houston K.A."/>
            <person name="Howland T.J."/>
            <person name="Wei M.-H."/>
            <person name="Ibegwam C."/>
            <person name="Jalali M."/>
            <person name="Kalush F."/>
            <person name="Karpen G.H."/>
            <person name="Ke Z."/>
            <person name="Kennison J.A."/>
            <person name="Ketchum K.A."/>
            <person name="Kimmel B.E."/>
            <person name="Kodira C.D."/>
            <person name="Kraft C.L."/>
            <person name="Kravitz S."/>
            <person name="Kulp D."/>
            <person name="Lai Z."/>
            <person name="Lasko P."/>
            <person name="Lei Y."/>
            <person name="Levitsky A.A."/>
            <person name="Li J.H."/>
            <person name="Li Z."/>
            <person name="Liang Y."/>
            <person name="Lin X."/>
            <person name="Liu X."/>
            <person name="Mattei B."/>
            <person name="McIntosh T.C."/>
            <person name="McLeod M.P."/>
            <person name="McPherson D."/>
            <person name="Merkulov G."/>
            <person name="Milshina N.V."/>
            <person name="Mobarry C."/>
            <person name="Morris J."/>
            <person name="Moshrefi A."/>
            <person name="Mount S.M."/>
            <person name="Moy M."/>
            <person name="Murphy B."/>
            <person name="Murphy L."/>
            <person name="Muzny D.M."/>
            <person name="Nelson D.L."/>
            <person name="Nelson D.R."/>
            <person name="Nelson K.A."/>
            <person name="Nixon K."/>
            <person name="Nusskern D.R."/>
            <person name="Pacleb J.M."/>
            <person name="Palazzolo M."/>
            <person name="Pittman G.S."/>
            <person name="Pan S."/>
            <person name="Pollard J."/>
            <person name="Puri V."/>
            <person name="Reese M.G."/>
            <person name="Reinert K."/>
            <person name="Remington K."/>
            <person name="Saunders R.D.C."/>
            <person name="Scheeler F."/>
            <person name="Shen H."/>
            <person name="Shue B.C."/>
            <person name="Siden-Kiamos I."/>
            <person name="Simpson M."/>
            <person name="Skupski M.P."/>
            <person name="Smith T.J."/>
            <person name="Spier E."/>
            <person name="Spradling A.C."/>
            <person name="Stapleton M."/>
            <person name="Strong R."/>
            <person name="Sun E."/>
            <person name="Svirskas R."/>
            <person name="Tector C."/>
            <person name="Turner R."/>
            <person name="Venter E."/>
            <person name="Wang A.H."/>
            <person name="Wang X."/>
            <person name="Wang Z.-Y."/>
            <person name="Wassarman D.A."/>
            <person name="Weinstock G.M."/>
            <person name="Weissenbach J."/>
            <person name="Williams S.M."/>
            <person name="Woodage T."/>
            <person name="Worley K.C."/>
            <person name="Wu D."/>
            <person name="Yang S."/>
            <person name="Yao Q.A."/>
            <person name="Ye J."/>
            <person name="Yeh R.-F."/>
            <person name="Zaveri J.S."/>
            <person name="Zhan M."/>
            <person name="Zhang G."/>
            <person name="Zhao Q."/>
            <person name="Zheng L."/>
            <person name="Zheng X.H."/>
            <person name="Zhong F.N."/>
            <person name="Zhong W."/>
            <person name="Zhou X."/>
            <person name="Zhu S.C."/>
            <person name="Zhu X."/>
            <person name="Smith H.O."/>
            <person name="Gibbs R.A."/>
            <person name="Myers E.W."/>
            <person name="Rubin G.M."/>
            <person name="Venter J.C."/>
        </authorList>
    </citation>
    <scope>NUCLEOTIDE SEQUENCE [LARGE SCALE GENOMIC DNA]</scope>
    <source>
        <strain>Berkeley</strain>
    </source>
</reference>
<reference key="3">
    <citation type="journal article" date="2002" name="Genome Biol.">
        <title>Annotation of the Drosophila melanogaster euchromatic genome: a systematic review.</title>
        <authorList>
            <person name="Misra S."/>
            <person name="Crosby M.A."/>
            <person name="Mungall C.J."/>
            <person name="Matthews B.B."/>
            <person name="Campbell K.S."/>
            <person name="Hradecky P."/>
            <person name="Huang Y."/>
            <person name="Kaminker J.S."/>
            <person name="Millburn G.H."/>
            <person name="Prochnik S.E."/>
            <person name="Smith C.D."/>
            <person name="Tupy J.L."/>
            <person name="Whitfield E.J."/>
            <person name="Bayraktaroglu L."/>
            <person name="Berman B.P."/>
            <person name="Bettencourt B.R."/>
            <person name="Celniker S.E."/>
            <person name="de Grey A.D.N.J."/>
            <person name="Drysdale R.A."/>
            <person name="Harris N.L."/>
            <person name="Richter J."/>
            <person name="Russo S."/>
            <person name="Schroeder A.J."/>
            <person name="Shu S.Q."/>
            <person name="Stapleton M."/>
            <person name="Yamada C."/>
            <person name="Ashburner M."/>
            <person name="Gelbart W.M."/>
            <person name="Rubin G.M."/>
            <person name="Lewis S.E."/>
        </authorList>
    </citation>
    <scope>GENOME REANNOTATION</scope>
    <source>
        <strain>Berkeley</strain>
    </source>
</reference>
<reference key="4">
    <citation type="journal article" date="2002" name="Genome Biol.">
        <title>A Drosophila full-length cDNA resource.</title>
        <authorList>
            <person name="Stapleton M."/>
            <person name="Carlson J.W."/>
            <person name="Brokstein P."/>
            <person name="Yu C."/>
            <person name="Champe M."/>
            <person name="George R.A."/>
            <person name="Guarin H."/>
            <person name="Kronmiller B."/>
            <person name="Pacleb J.M."/>
            <person name="Park S."/>
            <person name="Wan K.H."/>
            <person name="Rubin G.M."/>
            <person name="Celniker S.E."/>
        </authorList>
    </citation>
    <scope>NUCLEOTIDE SEQUENCE [LARGE SCALE MRNA]</scope>
    <source>
        <strain>Berkeley</strain>
        <tissue>Embryo</tissue>
    </source>
</reference>
<evidence type="ECO:0000255" key="1">
    <source>
        <dbReference type="PROSITE-ProRule" id="PRU00037"/>
    </source>
</evidence>
<evidence type="ECO:0000256" key="2">
    <source>
        <dbReference type="SAM" id="MobiDB-lite"/>
    </source>
</evidence>
<keyword id="KW-0963">Cytoplasm</keyword>
<keyword id="KW-0217">Developmental protein</keyword>
<keyword id="KW-1185">Reference proteome</keyword>
<name>GCL_DROME</name>
<sequence>MGQIVGSMHMNVAEVFSNRRKRKRSTDSSLGKDDPAQLDTTQPKKKKLLTTTQYIYKALFKEEKNSDVAVMALDKVWHLHKVYLSQSPYFYTMFNGTWREAQQNFIQITILDDRITVASLDAVFGSMYSDEIEIESADVISVLATATLFHLDGIIDKCAEVMVDNISPETAIQYYEAACQYGVVGVKKSTFQWFQINLLSIYSKQPNLLRHISIELMSALTASPDLYVMQTEFSLYTLLRTWMFLRLHPDYDPEDPVQRAEALKTQELLVNAGVETHAPSGDVVQWTYFTSRSEERSFLATPEGQPYVKVFQKLRTQYLTNHYMDLKIIYNDNIIPKEWLYRHIHNHWDALLRIDHGQEDCSPQQLDDEQFFENCMRCGRMLLEPGYQKWRWTGFNFGMDLILIMDSRRLNIRRHHRHEHERVLSLQTKRKFMVRTTVTSINAQRQAVFTQTSEICSLSLEKNEEVPLMVLDPKLVHPLLISINMLVVMPPNQSFKEIVPLSEEATTSLSIPISEIGANSDRPLSPSSADDSAVFIGDSEPSTPSSPAPRPRIAWSASETGAICGQLAC</sequence>
<dbReference type="EMBL" id="M97933">
    <property type="protein sequence ID" value="AAA28566.1"/>
    <property type="molecule type" value="Genomic_DNA"/>
</dbReference>
<dbReference type="EMBL" id="AE013599">
    <property type="protein sequence ID" value="AAF59048.1"/>
    <property type="molecule type" value="Genomic_DNA"/>
</dbReference>
<dbReference type="EMBL" id="AY061319">
    <property type="protein sequence ID" value="AAL28867.1"/>
    <property type="molecule type" value="mRNA"/>
</dbReference>
<dbReference type="PIR" id="A43317">
    <property type="entry name" value="A43317"/>
</dbReference>
<dbReference type="RefSeq" id="NP_724708.1">
    <property type="nucleotide sequence ID" value="NM_165622.2"/>
</dbReference>
<dbReference type="SMR" id="Q01820"/>
<dbReference type="BioGRID" id="61712">
    <property type="interactions" value="12"/>
</dbReference>
<dbReference type="DIP" id="DIP-21769N"/>
<dbReference type="FunCoup" id="Q01820">
    <property type="interactions" value="1556"/>
</dbReference>
<dbReference type="IntAct" id="Q01820">
    <property type="interactions" value="3"/>
</dbReference>
<dbReference type="STRING" id="7227.FBpp0087789"/>
<dbReference type="GlyGen" id="Q01820">
    <property type="glycosylation" value="1 site"/>
</dbReference>
<dbReference type="PaxDb" id="7227-FBpp0087789"/>
<dbReference type="DNASU" id="35864"/>
<dbReference type="EnsemblMetazoa" id="FBtr0088710">
    <property type="protein sequence ID" value="FBpp0087789"/>
    <property type="gene ID" value="FBgn0005695"/>
</dbReference>
<dbReference type="GeneID" id="35864"/>
<dbReference type="KEGG" id="dme:Dmel_CG8411"/>
<dbReference type="AGR" id="FB:FBgn0005695"/>
<dbReference type="CTD" id="35864"/>
<dbReference type="FlyBase" id="FBgn0005695">
    <property type="gene designation" value="gcl"/>
</dbReference>
<dbReference type="VEuPathDB" id="VectorBase:FBgn0005695"/>
<dbReference type="eggNOG" id="KOG4682">
    <property type="taxonomic scope" value="Eukaryota"/>
</dbReference>
<dbReference type="GeneTree" id="ENSGT00940000168453"/>
<dbReference type="InParanoid" id="Q01820"/>
<dbReference type="OMA" id="TGFNYGM"/>
<dbReference type="OrthoDB" id="6359943at2759"/>
<dbReference type="PhylomeDB" id="Q01820"/>
<dbReference type="SignaLink" id="Q01820"/>
<dbReference type="BioGRID-ORCS" id="35864">
    <property type="hits" value="0 hits in 3 CRISPR screens"/>
</dbReference>
<dbReference type="GenomeRNAi" id="35864"/>
<dbReference type="PRO" id="PR:Q01820"/>
<dbReference type="Proteomes" id="UP000000803">
    <property type="component" value="Chromosome 2R"/>
</dbReference>
<dbReference type="Bgee" id="FBgn0005695">
    <property type="expression patterns" value="Expressed in egg cell and 161 other cell types or tissues"/>
</dbReference>
<dbReference type="ExpressionAtlas" id="Q01820">
    <property type="expression patterns" value="baseline and differential"/>
</dbReference>
<dbReference type="GO" id="GO:0005938">
    <property type="term" value="C:cell cortex"/>
    <property type="evidence" value="ECO:0000314"/>
    <property type="project" value="FlyBase"/>
</dbReference>
<dbReference type="GO" id="GO:0031463">
    <property type="term" value="C:Cul3-RING ubiquitin ligase complex"/>
    <property type="evidence" value="ECO:0000353"/>
    <property type="project" value="FlyBase"/>
</dbReference>
<dbReference type="GO" id="GO:0034399">
    <property type="term" value="C:nuclear periphery"/>
    <property type="evidence" value="ECO:0000314"/>
    <property type="project" value="FlyBase"/>
</dbReference>
<dbReference type="GO" id="GO:0005643">
    <property type="term" value="C:nuclear pore"/>
    <property type="evidence" value="ECO:0000314"/>
    <property type="project" value="FlyBase"/>
</dbReference>
<dbReference type="GO" id="GO:1990756">
    <property type="term" value="F:ubiquitin-like ligase-substrate adaptor activity"/>
    <property type="evidence" value="ECO:0000314"/>
    <property type="project" value="FlyBase"/>
</dbReference>
<dbReference type="GO" id="GO:0007281">
    <property type="term" value="P:germ cell development"/>
    <property type="evidence" value="ECO:0000316"/>
    <property type="project" value="FlyBase"/>
</dbReference>
<dbReference type="GO" id="GO:0045892">
    <property type="term" value="P:negative regulation of DNA-templated transcription"/>
    <property type="evidence" value="ECO:0000304"/>
    <property type="project" value="FlyBase"/>
</dbReference>
<dbReference type="GO" id="GO:0120177">
    <property type="term" value="P:negative regulation of torso signaling pathway"/>
    <property type="evidence" value="ECO:0000315"/>
    <property type="project" value="FlyBase"/>
</dbReference>
<dbReference type="GO" id="GO:0016480">
    <property type="term" value="P:negative regulation of transcription by RNA polymerase III"/>
    <property type="evidence" value="ECO:0000315"/>
    <property type="project" value="FlyBase"/>
</dbReference>
<dbReference type="GO" id="GO:0007278">
    <property type="term" value="P:pole cell fate determination"/>
    <property type="evidence" value="ECO:0000314"/>
    <property type="project" value="FlyBase"/>
</dbReference>
<dbReference type="GO" id="GO:0007279">
    <property type="term" value="P:pole cell formation"/>
    <property type="evidence" value="ECO:0000304"/>
    <property type="project" value="FlyBase"/>
</dbReference>
<dbReference type="GO" id="GO:0043161">
    <property type="term" value="P:proteasome-mediated ubiquitin-dependent protein catabolic process"/>
    <property type="evidence" value="ECO:0000314"/>
    <property type="project" value="FlyBase"/>
</dbReference>
<dbReference type="GO" id="GO:0000209">
    <property type="term" value="P:protein polyubiquitination"/>
    <property type="evidence" value="ECO:0000314"/>
    <property type="project" value="FlyBase"/>
</dbReference>
<dbReference type="CDD" id="cd18495">
    <property type="entry name" value="BACK_GCL"/>
    <property type="match status" value="1"/>
</dbReference>
<dbReference type="CDD" id="cd18305">
    <property type="entry name" value="BTB_POZ_GCL"/>
    <property type="match status" value="1"/>
</dbReference>
<dbReference type="FunFam" id="3.30.710.10:FF:000198">
    <property type="entry name" value="Germ cell-less, isoform B"/>
    <property type="match status" value="1"/>
</dbReference>
<dbReference type="Gene3D" id="3.30.710.10">
    <property type="entry name" value="Potassium Channel Kv1.1, Chain A"/>
    <property type="match status" value="1"/>
</dbReference>
<dbReference type="InterPro" id="IPR000210">
    <property type="entry name" value="BTB/POZ_dom"/>
</dbReference>
<dbReference type="InterPro" id="IPR043380">
    <property type="entry name" value="Gcl-like"/>
</dbReference>
<dbReference type="InterPro" id="IPR011333">
    <property type="entry name" value="SKP1/BTB/POZ_sf"/>
</dbReference>
<dbReference type="PANTHER" id="PTHR23231:SF17">
    <property type="entry name" value="BTB DOMAIN-CONTAINING PROTEIN"/>
    <property type="match status" value="1"/>
</dbReference>
<dbReference type="PANTHER" id="PTHR23231">
    <property type="entry name" value="GERM CELL-LESS PROTEIN"/>
    <property type="match status" value="1"/>
</dbReference>
<dbReference type="Pfam" id="PF00651">
    <property type="entry name" value="BTB"/>
    <property type="match status" value="1"/>
</dbReference>
<dbReference type="SMART" id="SM00225">
    <property type="entry name" value="BTB"/>
    <property type="match status" value="1"/>
</dbReference>
<dbReference type="SUPFAM" id="SSF54695">
    <property type="entry name" value="POZ domain"/>
    <property type="match status" value="1"/>
</dbReference>
<dbReference type="PROSITE" id="PS50097">
    <property type="entry name" value="BTB"/>
    <property type="match status" value="1"/>
</dbReference>
<protein>
    <recommendedName>
        <fullName>Protein germ cell-less</fullName>
    </recommendedName>
</protein>
<comment type="function">
    <text>Required for the specification of pole cells and germ cell formation. Mothers with reduced glc function give rise to sterile adult progeny that lack germ cells.</text>
</comment>
<comment type="subcellular location">
    <subcellularLocation>
        <location>Cytoplasm</location>
    </subcellularLocation>
    <text>Pole plasm.</text>
</comment>
<comment type="developmental stage">
    <text>Oogenesis and embryogenesis.</text>
</comment>
<feature type="chain" id="PRO_0000087442" description="Protein germ cell-less">
    <location>
        <begin position="1"/>
        <end position="569"/>
    </location>
</feature>
<feature type="domain" description="BTB" evidence="1">
    <location>
        <begin position="66"/>
        <end position="136"/>
    </location>
</feature>
<feature type="region of interest" description="Disordered" evidence="2">
    <location>
        <begin position="17"/>
        <end position="43"/>
    </location>
</feature>
<feature type="region of interest" description="Disordered" evidence="2">
    <location>
        <begin position="517"/>
        <end position="553"/>
    </location>
</feature>
<proteinExistence type="evidence at transcript level"/>
<organism>
    <name type="scientific">Drosophila melanogaster</name>
    <name type="common">Fruit fly</name>
    <dbReference type="NCBI Taxonomy" id="7227"/>
    <lineage>
        <taxon>Eukaryota</taxon>
        <taxon>Metazoa</taxon>
        <taxon>Ecdysozoa</taxon>
        <taxon>Arthropoda</taxon>
        <taxon>Hexapoda</taxon>
        <taxon>Insecta</taxon>
        <taxon>Pterygota</taxon>
        <taxon>Neoptera</taxon>
        <taxon>Endopterygota</taxon>
        <taxon>Diptera</taxon>
        <taxon>Brachycera</taxon>
        <taxon>Muscomorpha</taxon>
        <taxon>Ephydroidea</taxon>
        <taxon>Drosophilidae</taxon>
        <taxon>Drosophila</taxon>
        <taxon>Sophophora</taxon>
    </lineage>
</organism>